<reference key="1">
    <citation type="journal article" date="1994" name="Plant Mol. Biol.">
        <title>Isolation of a Vicia faba metallothionein-like gene: expression in foliar trichomes.</title>
        <authorList>
            <person name="Foley R.C."/>
            <person name="Singh K.B."/>
        </authorList>
    </citation>
    <scope>NUCLEOTIDE SEQUENCE [MRNA]</scope>
</reference>
<dbReference type="EMBL" id="X77254">
    <property type="protein sequence ID" value="CAA54471.1"/>
    <property type="molecule type" value="mRNA"/>
</dbReference>
<dbReference type="PIR" id="S52636">
    <property type="entry name" value="S52636"/>
</dbReference>
<dbReference type="GO" id="GO:0046872">
    <property type="term" value="F:metal ion binding"/>
    <property type="evidence" value="ECO:0007669"/>
    <property type="project" value="UniProtKB-KW"/>
</dbReference>
<dbReference type="InterPro" id="IPR000347">
    <property type="entry name" value="Metalthion_15p"/>
</dbReference>
<dbReference type="PANTHER" id="PTHR33543">
    <property type="entry name" value="METALLOTHIONEIN-LIKE PROTEIN 2A"/>
    <property type="match status" value="1"/>
</dbReference>
<dbReference type="PANTHER" id="PTHR33543:SF33">
    <property type="entry name" value="METALLOTHIONEIN-LIKE PROTEIN 2B"/>
    <property type="match status" value="1"/>
</dbReference>
<dbReference type="Pfam" id="PF01439">
    <property type="entry name" value="Metallothio_2"/>
    <property type="match status" value="1"/>
</dbReference>
<evidence type="ECO:0000305" key="1"/>
<accession>Q41657</accession>
<feature type="chain" id="PRO_0000197411" description="Metallothionein-like protein type 2">
    <location>
        <begin position="1"/>
        <end position="77"/>
    </location>
</feature>
<sequence>MSCCGGNCGCGSSCKCGSGCGGCKMYADLSYTESTTSETLIMGVGSEKAQYESAEMGAENDGCKCGANCTCNPCTCK</sequence>
<protein>
    <recommendedName>
        <fullName>Metallothionein-like protein type 2</fullName>
    </recommendedName>
</protein>
<proteinExistence type="evidence at transcript level"/>
<keyword id="KW-0479">Metal-binding</keyword>
<keyword id="KW-0480">Metal-thiolate cluster</keyword>
<name>MT2_VICFA</name>
<comment type="function">
    <text>Metallothioneins have a high content of cysteine residues that bind various heavy metals.</text>
</comment>
<comment type="tissue specificity">
    <text>Expressed in the left, stem and flower, at very low levels in roots and is not detectable in mesophyll protoplasts.</text>
</comment>
<comment type="similarity">
    <text evidence="1">Belongs to the metallothionein superfamily. Type 15 family.</text>
</comment>
<gene>
    <name type="primary">MTI</name>
</gene>
<organism>
    <name type="scientific">Vicia faba</name>
    <name type="common">Broad bean</name>
    <name type="synonym">Faba vulgaris</name>
    <dbReference type="NCBI Taxonomy" id="3906"/>
    <lineage>
        <taxon>Eukaryota</taxon>
        <taxon>Viridiplantae</taxon>
        <taxon>Streptophyta</taxon>
        <taxon>Embryophyta</taxon>
        <taxon>Tracheophyta</taxon>
        <taxon>Spermatophyta</taxon>
        <taxon>Magnoliopsida</taxon>
        <taxon>eudicotyledons</taxon>
        <taxon>Gunneridae</taxon>
        <taxon>Pentapetalae</taxon>
        <taxon>rosids</taxon>
        <taxon>fabids</taxon>
        <taxon>Fabales</taxon>
        <taxon>Fabaceae</taxon>
        <taxon>Papilionoideae</taxon>
        <taxon>50 kb inversion clade</taxon>
        <taxon>NPAAA clade</taxon>
        <taxon>Hologalegina</taxon>
        <taxon>IRL clade</taxon>
        <taxon>Fabeae</taxon>
        <taxon>Vicia</taxon>
    </lineage>
</organism>